<reference key="1">
    <citation type="journal article" date="1999" name="Science">
        <title>Genome sequence of the radioresistant bacterium Deinococcus radiodurans R1.</title>
        <authorList>
            <person name="White O."/>
            <person name="Eisen J.A."/>
            <person name="Heidelberg J.F."/>
            <person name="Hickey E.K."/>
            <person name="Peterson J.D."/>
            <person name="Dodson R.J."/>
            <person name="Haft D.H."/>
            <person name="Gwinn M.L."/>
            <person name="Nelson W.C."/>
            <person name="Richardson D.L."/>
            <person name="Moffat K.S."/>
            <person name="Qin H."/>
            <person name="Jiang L."/>
            <person name="Pamphile W."/>
            <person name="Crosby M."/>
            <person name="Shen M."/>
            <person name="Vamathevan J.J."/>
            <person name="Lam P."/>
            <person name="McDonald L.A."/>
            <person name="Utterback T.R."/>
            <person name="Zalewski C."/>
            <person name="Makarova K.S."/>
            <person name="Aravind L."/>
            <person name="Daly M.J."/>
            <person name="Minton K.W."/>
            <person name="Fleischmann R.D."/>
            <person name="Ketchum K.A."/>
            <person name="Nelson K.E."/>
            <person name="Salzberg S.L."/>
            <person name="Smith H.O."/>
            <person name="Venter J.C."/>
            <person name="Fraser C.M."/>
        </authorList>
    </citation>
    <scope>NUCLEOTIDE SEQUENCE [LARGE SCALE GENOMIC DNA]</scope>
    <source>
        <strain>ATCC 13939 / DSM 20539 / JCM 16871 / CCUG 27074 / LMG 4051 / NBRC 15346 / NCIMB 9279 / VKM B-1422 / R1</strain>
    </source>
</reference>
<keyword id="KW-0067">ATP-binding</keyword>
<keyword id="KW-0131">Cell cycle</keyword>
<keyword id="KW-0132">Cell division</keyword>
<keyword id="KW-0133">Cell shape</keyword>
<keyword id="KW-0961">Cell wall biogenesis/degradation</keyword>
<keyword id="KW-0963">Cytoplasm</keyword>
<keyword id="KW-0436">Ligase</keyword>
<keyword id="KW-0547">Nucleotide-binding</keyword>
<keyword id="KW-0573">Peptidoglycan synthesis</keyword>
<keyword id="KW-1185">Reference proteome</keyword>
<accession>Q9RXL3</accession>
<comment type="function">
    <text evidence="1">Catalyzes the addition of an amino acid to the nucleotide precursor UDP-N-acetylmuramoyl-L-alanyl-D-glutamate (UMAG) in the biosynthesis of bacterial cell-wall peptidoglycan.</text>
</comment>
<comment type="pathway">
    <text evidence="1">Cell wall biogenesis; peptidoglycan biosynthesis.</text>
</comment>
<comment type="subcellular location">
    <subcellularLocation>
        <location evidence="1">Cytoplasm</location>
    </subcellularLocation>
</comment>
<comment type="PTM">
    <text evidence="1">Carboxylation is probably crucial for Mg(2+) binding and, consequently, for the gamma-phosphate positioning of ATP.</text>
</comment>
<comment type="similarity">
    <text evidence="1">Belongs to the MurCDEF family. MurE subfamily.</text>
</comment>
<protein>
    <recommendedName>
        <fullName evidence="1">UDP-N-acetylmuramyl-tripeptide synthetase</fullName>
        <ecNumber evidence="1">6.3.2.-</ecNumber>
    </recommendedName>
    <alternativeName>
        <fullName evidence="1">UDP-MurNAc-tripeptide synthetase</fullName>
    </alternativeName>
</protein>
<sequence length="490" mass="52317">MRLSDLAAALQLPAPETDPQTDTEVTGVTHNAAWVQPGSAFVAIRGAKFDGHSFMEQAQAAGAVAVLGEGLADGQTSPLPYLTVPNARAALADAAAALAGHPSRELKVVGVTGTDGKTTTSWLTRHLLRSAGLATGLLSTVGYELPDGELRHFPAHFTTPEAPQVQDTLREMVAAGAQATVLEASSHALSLDRVRGVDWDVAVWTHLSSEHLDFHGTLDNYFADKRKLVERARFAVLNVDDPWTAQLRGIAPGETTYSAENQHADWRAQDIEERHSGLHFRVVSPAGDFQAELPMIGRFNVANALAGMAAAHHLGATALQLQAGLASFRGVPGRMELVPGGATSPRVIVDFAHTPPSLEKALGTLRATTAGHLWVVIGSAGGPRDPYKRAPLGEVATRLADHAILTEEDCRDTPLQDILNEMERGAREEGRSNFVSIGDRREAIRYAVTHAQPGDTVLLAGKGPEDTLERATETLPWNEVAEARAVLAER</sequence>
<proteinExistence type="inferred from homology"/>
<dbReference type="EC" id="6.3.2.-" evidence="1"/>
<dbReference type="EMBL" id="AE000513">
    <property type="protein sequence ID" value="AAF09877.1"/>
    <property type="molecule type" value="Genomic_DNA"/>
</dbReference>
<dbReference type="PIR" id="B75538">
    <property type="entry name" value="B75538"/>
</dbReference>
<dbReference type="RefSeq" id="NP_294020.1">
    <property type="nucleotide sequence ID" value="NC_001263.1"/>
</dbReference>
<dbReference type="RefSeq" id="WP_010886942.1">
    <property type="nucleotide sequence ID" value="NC_001263.1"/>
</dbReference>
<dbReference type="SMR" id="Q9RXL3"/>
<dbReference type="FunCoup" id="Q9RXL3">
    <property type="interactions" value="414"/>
</dbReference>
<dbReference type="STRING" id="243230.DR_0297"/>
<dbReference type="PaxDb" id="243230-DR_0297"/>
<dbReference type="EnsemblBacteria" id="AAF09877">
    <property type="protein sequence ID" value="AAF09877"/>
    <property type="gene ID" value="DR_0297"/>
</dbReference>
<dbReference type="GeneID" id="69516530"/>
<dbReference type="KEGG" id="dra:DR_0297"/>
<dbReference type="PATRIC" id="fig|243230.17.peg.462"/>
<dbReference type="eggNOG" id="COG0769">
    <property type="taxonomic scope" value="Bacteria"/>
</dbReference>
<dbReference type="HOGENOM" id="CLU_022291_4_1_0"/>
<dbReference type="InParanoid" id="Q9RXL3"/>
<dbReference type="OrthoDB" id="9800958at2"/>
<dbReference type="UniPathway" id="UPA00219"/>
<dbReference type="Proteomes" id="UP000002524">
    <property type="component" value="Chromosome 1"/>
</dbReference>
<dbReference type="GO" id="GO:0005737">
    <property type="term" value="C:cytoplasm"/>
    <property type="evidence" value="ECO:0007669"/>
    <property type="project" value="UniProtKB-SubCell"/>
</dbReference>
<dbReference type="GO" id="GO:0016881">
    <property type="term" value="F:acid-amino acid ligase activity"/>
    <property type="evidence" value="ECO:0007669"/>
    <property type="project" value="UniProtKB-UniRule"/>
</dbReference>
<dbReference type="GO" id="GO:0005524">
    <property type="term" value="F:ATP binding"/>
    <property type="evidence" value="ECO:0007669"/>
    <property type="project" value="UniProtKB-UniRule"/>
</dbReference>
<dbReference type="GO" id="GO:0000287">
    <property type="term" value="F:magnesium ion binding"/>
    <property type="evidence" value="ECO:0007669"/>
    <property type="project" value="UniProtKB-UniRule"/>
</dbReference>
<dbReference type="GO" id="GO:0051301">
    <property type="term" value="P:cell division"/>
    <property type="evidence" value="ECO:0007669"/>
    <property type="project" value="UniProtKB-KW"/>
</dbReference>
<dbReference type="GO" id="GO:0071555">
    <property type="term" value="P:cell wall organization"/>
    <property type="evidence" value="ECO:0007669"/>
    <property type="project" value="UniProtKB-KW"/>
</dbReference>
<dbReference type="GO" id="GO:0009252">
    <property type="term" value="P:peptidoglycan biosynthetic process"/>
    <property type="evidence" value="ECO:0007669"/>
    <property type="project" value="UniProtKB-UniRule"/>
</dbReference>
<dbReference type="GO" id="GO:0008360">
    <property type="term" value="P:regulation of cell shape"/>
    <property type="evidence" value="ECO:0007669"/>
    <property type="project" value="UniProtKB-KW"/>
</dbReference>
<dbReference type="Gene3D" id="3.90.190.20">
    <property type="entry name" value="Mur ligase, C-terminal domain"/>
    <property type="match status" value="1"/>
</dbReference>
<dbReference type="Gene3D" id="3.40.1190.10">
    <property type="entry name" value="Mur-like, catalytic domain"/>
    <property type="match status" value="1"/>
</dbReference>
<dbReference type="Gene3D" id="3.40.1390.10">
    <property type="entry name" value="MurE/MurF, N-terminal domain"/>
    <property type="match status" value="1"/>
</dbReference>
<dbReference type="HAMAP" id="MF_00208">
    <property type="entry name" value="MurE"/>
    <property type="match status" value="1"/>
</dbReference>
<dbReference type="InterPro" id="IPR036565">
    <property type="entry name" value="Mur-like_cat_sf"/>
</dbReference>
<dbReference type="InterPro" id="IPR004101">
    <property type="entry name" value="Mur_ligase_C"/>
</dbReference>
<dbReference type="InterPro" id="IPR036615">
    <property type="entry name" value="Mur_ligase_C_dom_sf"/>
</dbReference>
<dbReference type="InterPro" id="IPR013221">
    <property type="entry name" value="Mur_ligase_cen"/>
</dbReference>
<dbReference type="InterPro" id="IPR000713">
    <property type="entry name" value="Mur_ligase_N"/>
</dbReference>
<dbReference type="InterPro" id="IPR035911">
    <property type="entry name" value="MurE/MurF_N"/>
</dbReference>
<dbReference type="InterPro" id="IPR005761">
    <property type="entry name" value="UDP-N-AcMur-Glu-dNH2Pim_ligase"/>
</dbReference>
<dbReference type="NCBIfam" id="TIGR01085">
    <property type="entry name" value="murE"/>
    <property type="match status" value="1"/>
</dbReference>
<dbReference type="NCBIfam" id="NF001126">
    <property type="entry name" value="PRK00139.1-4"/>
    <property type="match status" value="1"/>
</dbReference>
<dbReference type="PANTHER" id="PTHR23135">
    <property type="entry name" value="MUR LIGASE FAMILY MEMBER"/>
    <property type="match status" value="1"/>
</dbReference>
<dbReference type="PANTHER" id="PTHR23135:SF4">
    <property type="entry name" value="UDP-N-ACETYLMURAMOYL-L-ALANYL-D-GLUTAMATE--2,6-DIAMINOPIMELATE LIGASE MURE HOMOLOG, CHLOROPLASTIC"/>
    <property type="match status" value="1"/>
</dbReference>
<dbReference type="Pfam" id="PF01225">
    <property type="entry name" value="Mur_ligase"/>
    <property type="match status" value="1"/>
</dbReference>
<dbReference type="Pfam" id="PF02875">
    <property type="entry name" value="Mur_ligase_C"/>
    <property type="match status" value="1"/>
</dbReference>
<dbReference type="Pfam" id="PF08245">
    <property type="entry name" value="Mur_ligase_M"/>
    <property type="match status" value="1"/>
</dbReference>
<dbReference type="SUPFAM" id="SSF53623">
    <property type="entry name" value="MurD-like peptide ligases, catalytic domain"/>
    <property type="match status" value="1"/>
</dbReference>
<dbReference type="SUPFAM" id="SSF53244">
    <property type="entry name" value="MurD-like peptide ligases, peptide-binding domain"/>
    <property type="match status" value="1"/>
</dbReference>
<dbReference type="SUPFAM" id="SSF63418">
    <property type="entry name" value="MurE/MurF N-terminal domain"/>
    <property type="match status" value="1"/>
</dbReference>
<name>MURE_DEIRA</name>
<gene>
    <name evidence="1" type="primary">murE</name>
    <name type="ordered locus">DR_0297</name>
</gene>
<evidence type="ECO:0000255" key="1">
    <source>
        <dbReference type="HAMAP-Rule" id="MF_00208"/>
    </source>
</evidence>
<organism>
    <name type="scientific">Deinococcus radiodurans (strain ATCC 13939 / DSM 20539 / JCM 16871 / CCUG 27074 / LMG 4051 / NBRC 15346 / NCIMB 9279 / VKM B-1422 / R1)</name>
    <dbReference type="NCBI Taxonomy" id="243230"/>
    <lineage>
        <taxon>Bacteria</taxon>
        <taxon>Thermotogati</taxon>
        <taxon>Deinococcota</taxon>
        <taxon>Deinococci</taxon>
        <taxon>Deinococcales</taxon>
        <taxon>Deinococcaceae</taxon>
        <taxon>Deinococcus</taxon>
    </lineage>
</organism>
<feature type="chain" id="PRO_0000101892" description="UDP-N-acetylmuramyl-tripeptide synthetase">
    <location>
        <begin position="1"/>
        <end position="490"/>
    </location>
</feature>
<feature type="binding site" evidence="1">
    <location>
        <begin position="113"/>
        <end position="119"/>
    </location>
    <ligand>
        <name>ATP</name>
        <dbReference type="ChEBI" id="CHEBI:30616"/>
    </ligand>
</feature>
<feature type="binding site" evidence="1">
    <location>
        <begin position="158"/>
        <end position="159"/>
    </location>
    <ligand>
        <name>UDP-N-acetyl-alpha-D-muramoyl-L-alanyl-D-glutamate</name>
        <dbReference type="ChEBI" id="CHEBI:83900"/>
    </ligand>
</feature>
<feature type="binding site" evidence="1">
    <location>
        <position position="185"/>
    </location>
    <ligand>
        <name>UDP-N-acetyl-alpha-D-muramoyl-L-alanyl-D-glutamate</name>
        <dbReference type="ChEBI" id="CHEBI:83900"/>
    </ligand>
</feature>
<feature type="binding site" evidence="1">
    <location>
        <position position="193"/>
    </location>
    <ligand>
        <name>UDP-N-acetyl-alpha-D-muramoyl-L-alanyl-D-glutamate</name>
        <dbReference type="ChEBI" id="CHEBI:83900"/>
    </ligand>
</feature>
<feature type="modified residue" description="N6-carboxylysine" evidence="1">
    <location>
        <position position="225"/>
    </location>
</feature>